<proteinExistence type="evidence at protein level"/>
<evidence type="ECO:0000269" key="1">
    <source>
    </source>
</evidence>
<evidence type="ECO:0000305" key="2"/>
<gene>
    <name type="primary">DWA2</name>
    <name type="ordered locus">At1g76260</name>
    <name type="ORF">F15M4.24</name>
    <name type="ORF">T23E18.19</name>
</gene>
<organism>
    <name type="scientific">Arabidopsis thaliana</name>
    <name type="common">Mouse-ear cress</name>
    <dbReference type="NCBI Taxonomy" id="3702"/>
    <lineage>
        <taxon>Eukaryota</taxon>
        <taxon>Viridiplantae</taxon>
        <taxon>Streptophyta</taxon>
        <taxon>Embryophyta</taxon>
        <taxon>Tracheophyta</taxon>
        <taxon>Spermatophyta</taxon>
        <taxon>Magnoliopsida</taxon>
        <taxon>eudicotyledons</taxon>
        <taxon>Gunneridae</taxon>
        <taxon>Pentapetalae</taxon>
        <taxon>rosids</taxon>
        <taxon>malvids</taxon>
        <taxon>Brassicales</taxon>
        <taxon>Brassicaceae</taxon>
        <taxon>Camelineae</taxon>
        <taxon>Arabidopsis</taxon>
    </lineage>
</organism>
<name>DWA2_ARATH</name>
<reference key="1">
    <citation type="journal article" date="2000" name="Nature">
        <title>Sequence and analysis of chromosome 1 of the plant Arabidopsis thaliana.</title>
        <authorList>
            <person name="Theologis A."/>
            <person name="Ecker J.R."/>
            <person name="Palm C.J."/>
            <person name="Federspiel N.A."/>
            <person name="Kaul S."/>
            <person name="White O."/>
            <person name="Alonso J."/>
            <person name="Altafi H."/>
            <person name="Araujo R."/>
            <person name="Bowman C.L."/>
            <person name="Brooks S.Y."/>
            <person name="Buehler E."/>
            <person name="Chan A."/>
            <person name="Chao Q."/>
            <person name="Chen H."/>
            <person name="Cheuk R.F."/>
            <person name="Chin C.W."/>
            <person name="Chung M.K."/>
            <person name="Conn L."/>
            <person name="Conway A.B."/>
            <person name="Conway A.R."/>
            <person name="Creasy T.H."/>
            <person name="Dewar K."/>
            <person name="Dunn P."/>
            <person name="Etgu P."/>
            <person name="Feldblyum T.V."/>
            <person name="Feng J.-D."/>
            <person name="Fong B."/>
            <person name="Fujii C.Y."/>
            <person name="Gill J.E."/>
            <person name="Goldsmith A.D."/>
            <person name="Haas B."/>
            <person name="Hansen N.F."/>
            <person name="Hughes B."/>
            <person name="Huizar L."/>
            <person name="Hunter J.L."/>
            <person name="Jenkins J."/>
            <person name="Johnson-Hopson C."/>
            <person name="Khan S."/>
            <person name="Khaykin E."/>
            <person name="Kim C.J."/>
            <person name="Koo H.L."/>
            <person name="Kremenetskaia I."/>
            <person name="Kurtz D.B."/>
            <person name="Kwan A."/>
            <person name="Lam B."/>
            <person name="Langin-Hooper S."/>
            <person name="Lee A."/>
            <person name="Lee J.M."/>
            <person name="Lenz C.A."/>
            <person name="Li J.H."/>
            <person name="Li Y.-P."/>
            <person name="Lin X."/>
            <person name="Liu S.X."/>
            <person name="Liu Z.A."/>
            <person name="Luros J.S."/>
            <person name="Maiti R."/>
            <person name="Marziali A."/>
            <person name="Militscher J."/>
            <person name="Miranda M."/>
            <person name="Nguyen M."/>
            <person name="Nierman W.C."/>
            <person name="Osborne B.I."/>
            <person name="Pai G."/>
            <person name="Peterson J."/>
            <person name="Pham P.K."/>
            <person name="Rizzo M."/>
            <person name="Rooney T."/>
            <person name="Rowley D."/>
            <person name="Sakano H."/>
            <person name="Salzberg S.L."/>
            <person name="Schwartz J.R."/>
            <person name="Shinn P."/>
            <person name="Southwick A.M."/>
            <person name="Sun H."/>
            <person name="Tallon L.J."/>
            <person name="Tambunga G."/>
            <person name="Toriumi M.J."/>
            <person name="Town C.D."/>
            <person name="Utterback T."/>
            <person name="Van Aken S."/>
            <person name="Vaysberg M."/>
            <person name="Vysotskaia V.S."/>
            <person name="Walker M."/>
            <person name="Wu D."/>
            <person name="Yu G."/>
            <person name="Fraser C.M."/>
            <person name="Venter J.C."/>
            <person name="Davis R.W."/>
        </authorList>
    </citation>
    <scope>NUCLEOTIDE SEQUENCE [LARGE SCALE GENOMIC DNA]</scope>
    <source>
        <strain>cv. Columbia</strain>
    </source>
</reference>
<reference key="2">
    <citation type="journal article" date="2017" name="Plant J.">
        <title>Araport11: a complete reannotation of the Arabidopsis thaliana reference genome.</title>
        <authorList>
            <person name="Cheng C.Y."/>
            <person name="Krishnakumar V."/>
            <person name="Chan A.P."/>
            <person name="Thibaud-Nissen F."/>
            <person name="Schobel S."/>
            <person name="Town C.D."/>
        </authorList>
    </citation>
    <scope>GENOME REANNOTATION</scope>
    <source>
        <strain>cv. Columbia</strain>
    </source>
</reference>
<reference key="3">
    <citation type="submission" date="2003-12" db="EMBL/GenBank/DDBJ databases">
        <title>Arabidopsis ORF clones.</title>
        <authorList>
            <person name="Kim C.J."/>
            <person name="Chen H."/>
            <person name="Cheuk R.F."/>
            <person name="Shinn P."/>
            <person name="Carninci P."/>
            <person name="Hayashizaki Y."/>
            <person name="Ishida J."/>
            <person name="Kamiya A."/>
            <person name="Kawai J."/>
            <person name="Narusaka M."/>
            <person name="Sakurai T."/>
            <person name="Satou M."/>
            <person name="Seki M."/>
            <person name="Shinozaki K."/>
            <person name="Ecker J.R."/>
        </authorList>
    </citation>
    <scope>NUCLEOTIDE SEQUENCE [LARGE SCALE MRNA]</scope>
    <source>
        <strain>cv. Columbia</strain>
    </source>
</reference>
<reference key="4">
    <citation type="submission" date="2004-09" db="EMBL/GenBank/DDBJ databases">
        <title>Large-scale analysis of RIKEN Arabidopsis full-length (RAFL) cDNAs.</title>
        <authorList>
            <person name="Totoki Y."/>
            <person name="Seki M."/>
            <person name="Ishida J."/>
            <person name="Nakajima M."/>
            <person name="Enju A."/>
            <person name="Kamiya A."/>
            <person name="Narusaka M."/>
            <person name="Shin-i T."/>
            <person name="Nakagawa M."/>
            <person name="Sakamoto N."/>
            <person name="Oishi K."/>
            <person name="Kohara Y."/>
            <person name="Kobayashi M."/>
            <person name="Toyoda A."/>
            <person name="Sakaki Y."/>
            <person name="Sakurai T."/>
            <person name="Iida K."/>
            <person name="Akiyama K."/>
            <person name="Satou M."/>
            <person name="Toyoda T."/>
            <person name="Konagaya A."/>
            <person name="Carninci P."/>
            <person name="Kawai J."/>
            <person name="Hayashizaki Y."/>
            <person name="Shinozaki K."/>
        </authorList>
    </citation>
    <scope>NUCLEOTIDE SEQUENCE [LARGE SCALE MRNA]</scope>
    <source>
        <strain>cv. Columbia</strain>
    </source>
</reference>
<reference key="5">
    <citation type="journal article" date="2010" name="Plant Cell">
        <title>DWA1 and DWA2, two Arabidopsis DWD protein components of CUL4-based E3 ligases, act together as negative regulators in aba signal transduction.</title>
        <authorList>
            <person name="Lee J.H."/>
            <person name="Yoon H.J."/>
            <person name="Terzaghi W."/>
            <person name="Martinez C."/>
            <person name="Dai M."/>
            <person name="Li J."/>
            <person name="Byun M.O."/>
            <person name="Deng X.W."/>
        </authorList>
    </citation>
    <scope>FUNCTION</scope>
    <scope>COMPONENT OF THE CUL4-RBX1-DDB1-DWA1 COMPLEX</scope>
    <scope>INTERACTION WITH ABI5; DDB1A AND DWA2</scope>
    <scope>SUBCELLULAR LOCATION</scope>
    <scope>DISRUPTION PHENOTYPE</scope>
</reference>
<keyword id="KW-0938">Abscisic acid signaling pathway</keyword>
<keyword id="KW-0539">Nucleus</keyword>
<keyword id="KW-1185">Reference proteome</keyword>
<keyword id="KW-0677">Repeat</keyword>
<keyword id="KW-0833">Ubl conjugation pathway</keyword>
<keyword id="KW-0853">WD repeat</keyword>
<feature type="chain" id="PRO_0000396858" description="WD repeat-containing protein DWA2">
    <location>
        <begin position="1"/>
        <end position="350"/>
    </location>
</feature>
<feature type="repeat" description="WD 1">
    <location>
        <begin position="39"/>
        <end position="79"/>
    </location>
</feature>
<feature type="repeat" description="WD 2">
    <location>
        <begin position="118"/>
        <end position="158"/>
    </location>
</feature>
<feature type="repeat" description="WD 3">
    <location>
        <begin position="166"/>
        <end position="205"/>
    </location>
</feature>
<feature type="repeat" description="WD 4">
    <location>
        <begin position="206"/>
        <end position="246"/>
    </location>
</feature>
<feature type="repeat" description="WD 5">
    <location>
        <begin position="250"/>
        <end position="290"/>
    </location>
</feature>
<feature type="repeat" description="WD 6">
    <location>
        <begin position="311"/>
        <end position="350"/>
    </location>
</feature>
<feature type="sequence conflict" description="In Ref. 3; BAD44173." evidence="2" ref="3">
    <original>N</original>
    <variation>D</variation>
    <location>
        <position position="217"/>
    </location>
</feature>
<accession>Q6NPN9</accession>
<accession>Q67YQ8</accession>
<accession>Q9SFW2</accession>
<accession>Q9SGQ8</accession>
<protein>
    <recommendedName>
        <fullName>WD repeat-containing protein DWA2</fullName>
    </recommendedName>
    <alternativeName>
        <fullName>Protein DWD HYPERSENSITIVE TO ABA 2</fullName>
    </alternativeName>
</protein>
<comment type="function">
    <text evidence="1">Component of the CUL4-RBX1-DDB1-DWA1/DWA2 E3 ubiquitin-protein ligase complex that acts as a negative regulator in abscisic acid (ABA) signaling. May function as the substrate recognition module within this complex leading to ABI5 degradation. Functionally redundant with DWA1.</text>
</comment>
<comment type="pathway">
    <text>Protein modification; protein ubiquitination.</text>
</comment>
<comment type="subunit">
    <text evidence="1">Interacts with ABI5 and DDB1A and DWA1.</text>
</comment>
<comment type="subcellular location">
    <subcellularLocation>
        <location evidence="1">Nucleus</location>
    </subcellularLocation>
</comment>
<comment type="disruption phenotype">
    <text evidence="1">Increased sensitivity to abscisic acid (ABA) and salt.</text>
</comment>
<comment type="sequence caution" evidence="2">
    <conflict type="erroneous gene model prediction">
        <sequence resource="EMBL-CDS" id="AAF16674"/>
    </conflict>
</comment>
<comment type="sequence caution" evidence="2">
    <conflict type="erroneous gene model prediction">
        <sequence resource="EMBL-CDS" id="AAF17630"/>
    </conflict>
</comment>
<sequence>MQGGSSGIGYGLKYQARCISDVKADRDHTSFLTGTLSLKEENEVHLLRLSSGGSELLCEGLFSHPNEIWDLASSPFDQRIFSTVFSTGDSYGAAIWQIPEPYGQSNSSTLECVASLDAHVGKINCVLWCPSGNSDKLISMDEQNLVFWSLDSSKKSAEVLSKESAGMRHSLSGGAWNPHDVNSVAATSESSIQFWDLRTMKKNNSIERAHVRNVDYNLKREHILVSADDESGIHLWDLRKTKFPVQELPGHTHWTWAVRCNPEYEELILSVGTDSAVNLWFASASSEHKTSESPVEASRQRVNPLLNSYTDYEDSVYGLAWSSREPWIFASLSYDGRVVIESVKPFLPRR</sequence>
<dbReference type="EMBL" id="AC009978">
    <property type="protein sequence ID" value="AAF17630.1"/>
    <property type="status" value="ALT_SEQ"/>
    <property type="molecule type" value="Genomic_DNA"/>
</dbReference>
<dbReference type="EMBL" id="AC012394">
    <property type="protein sequence ID" value="AAF16674.1"/>
    <property type="status" value="ALT_SEQ"/>
    <property type="molecule type" value="Genomic_DNA"/>
</dbReference>
<dbReference type="EMBL" id="CP002684">
    <property type="protein sequence ID" value="AEE35816.1"/>
    <property type="molecule type" value="Genomic_DNA"/>
</dbReference>
<dbReference type="EMBL" id="BT010880">
    <property type="protein sequence ID" value="AAR24658.1"/>
    <property type="molecule type" value="mRNA"/>
</dbReference>
<dbReference type="EMBL" id="AK176410">
    <property type="protein sequence ID" value="BAD44173.1"/>
    <property type="molecule type" value="mRNA"/>
</dbReference>
<dbReference type="EMBL" id="AK175439">
    <property type="protein sequence ID" value="BAD43202.1"/>
    <property type="molecule type" value="mRNA"/>
</dbReference>
<dbReference type="EMBL" id="AK176650">
    <property type="protein sequence ID" value="BAD44413.1"/>
    <property type="molecule type" value="mRNA"/>
</dbReference>
<dbReference type="RefSeq" id="NP_177753.1">
    <property type="nucleotide sequence ID" value="NM_106276.5"/>
</dbReference>
<dbReference type="SMR" id="Q6NPN9"/>
<dbReference type="BioGRID" id="29178">
    <property type="interactions" value="5"/>
</dbReference>
<dbReference type="FunCoup" id="Q6NPN9">
    <property type="interactions" value="3743"/>
</dbReference>
<dbReference type="STRING" id="3702.Q6NPN9"/>
<dbReference type="iPTMnet" id="Q6NPN9"/>
<dbReference type="PaxDb" id="3702-AT1G76260.1"/>
<dbReference type="ProteomicsDB" id="222041"/>
<dbReference type="DNASU" id="843959"/>
<dbReference type="EnsemblPlants" id="AT1G76260.1">
    <property type="protein sequence ID" value="AT1G76260.1"/>
    <property type="gene ID" value="AT1G76260"/>
</dbReference>
<dbReference type="GeneID" id="843959"/>
<dbReference type="Gramene" id="AT1G76260.1">
    <property type="protein sequence ID" value="AT1G76260.1"/>
    <property type="gene ID" value="AT1G76260"/>
</dbReference>
<dbReference type="KEGG" id="ath:AT1G76260"/>
<dbReference type="Araport" id="AT1G76260"/>
<dbReference type="TAIR" id="AT1G76260">
    <property type="gene designation" value="DWA2"/>
</dbReference>
<dbReference type="eggNOG" id="KOG1007">
    <property type="taxonomic scope" value="Eukaryota"/>
</dbReference>
<dbReference type="HOGENOM" id="CLU_050772_0_0_1"/>
<dbReference type="InParanoid" id="Q6NPN9"/>
<dbReference type="OMA" id="HKYAILR"/>
<dbReference type="OrthoDB" id="196957at2759"/>
<dbReference type="PhylomeDB" id="Q6NPN9"/>
<dbReference type="UniPathway" id="UPA00143"/>
<dbReference type="PRO" id="PR:Q6NPN9"/>
<dbReference type="Proteomes" id="UP000006548">
    <property type="component" value="Chromosome 1"/>
</dbReference>
<dbReference type="ExpressionAtlas" id="Q6NPN9">
    <property type="expression patterns" value="baseline and differential"/>
</dbReference>
<dbReference type="GO" id="GO:0080008">
    <property type="term" value="C:Cul4-RING E3 ubiquitin ligase complex"/>
    <property type="evidence" value="ECO:0000250"/>
    <property type="project" value="TAIR"/>
</dbReference>
<dbReference type="GO" id="GO:0005634">
    <property type="term" value="C:nucleus"/>
    <property type="evidence" value="ECO:0000314"/>
    <property type="project" value="UniProtKB"/>
</dbReference>
<dbReference type="GO" id="GO:0009738">
    <property type="term" value="P:abscisic acid-activated signaling pathway"/>
    <property type="evidence" value="ECO:0007669"/>
    <property type="project" value="UniProtKB-KW"/>
</dbReference>
<dbReference type="GO" id="GO:0009788">
    <property type="term" value="P:negative regulation of abscisic acid-activated signaling pathway"/>
    <property type="evidence" value="ECO:0000315"/>
    <property type="project" value="UniProtKB"/>
</dbReference>
<dbReference type="GO" id="GO:0016567">
    <property type="term" value="P:protein ubiquitination"/>
    <property type="evidence" value="ECO:0000315"/>
    <property type="project" value="UniProtKB"/>
</dbReference>
<dbReference type="FunFam" id="2.130.10.10:FF:000352">
    <property type="entry name" value="WD repeat-containing protein DWA2"/>
    <property type="match status" value="1"/>
</dbReference>
<dbReference type="Gene3D" id="2.130.10.10">
    <property type="entry name" value="YVTN repeat-like/Quinoprotein amine dehydrogenase"/>
    <property type="match status" value="1"/>
</dbReference>
<dbReference type="InterPro" id="IPR040323">
    <property type="entry name" value="EIPR1"/>
</dbReference>
<dbReference type="InterPro" id="IPR015943">
    <property type="entry name" value="WD40/YVTN_repeat-like_dom_sf"/>
</dbReference>
<dbReference type="InterPro" id="IPR036322">
    <property type="entry name" value="WD40_repeat_dom_sf"/>
</dbReference>
<dbReference type="InterPro" id="IPR001680">
    <property type="entry name" value="WD40_rpt"/>
</dbReference>
<dbReference type="PANTHER" id="PTHR14205:SF16">
    <property type="entry name" value="WD REPEAT-CONTAINING PROTEIN DWA2"/>
    <property type="match status" value="1"/>
</dbReference>
<dbReference type="PANTHER" id="PTHR14205">
    <property type="entry name" value="WD-REPEAT PROTEIN"/>
    <property type="match status" value="1"/>
</dbReference>
<dbReference type="Pfam" id="PF23609">
    <property type="entry name" value="Beta-prop_EIPR1"/>
    <property type="match status" value="1"/>
</dbReference>
<dbReference type="Pfam" id="PF00400">
    <property type="entry name" value="WD40"/>
    <property type="match status" value="1"/>
</dbReference>
<dbReference type="SMART" id="SM00320">
    <property type="entry name" value="WD40"/>
    <property type="match status" value="6"/>
</dbReference>
<dbReference type="SUPFAM" id="SSF50978">
    <property type="entry name" value="WD40 repeat-like"/>
    <property type="match status" value="1"/>
</dbReference>
<dbReference type="PROSITE" id="PS50294">
    <property type="entry name" value="WD_REPEATS_REGION"/>
    <property type="match status" value="1"/>
</dbReference>